<keyword id="KW-0963">Cytoplasm</keyword>
<keyword id="KW-0479">Metal-binding</keyword>
<keyword id="KW-1185">Reference proteome</keyword>
<keyword id="KW-0677">Repeat</keyword>
<keyword id="KW-0690">Ribosome biogenesis</keyword>
<keyword id="KW-0862">Zinc</keyword>
<keyword id="KW-0863">Zinc-finger</keyword>
<reference key="1">
    <citation type="journal article" date="1999" name="Plant Mol. Biol.">
        <title>FZF, a putative, multiple C2H2 zinc finger protein from Arabidopsis thaliana.</title>
        <authorList>
            <person name="Jensen R.B."/>
            <person name="Skriver K."/>
            <person name="Jespersen H.M."/>
        </authorList>
    </citation>
    <scope>NUCLEOTIDE SEQUENCE [MRNA]</scope>
    <source>
        <strain>cv. Columbia</strain>
    </source>
</reference>
<reference key="2">
    <citation type="journal article" date="1999" name="Nature">
        <title>Sequence and analysis of chromosome 2 of the plant Arabidopsis thaliana.</title>
        <authorList>
            <person name="Lin X."/>
            <person name="Kaul S."/>
            <person name="Rounsley S.D."/>
            <person name="Shea T.P."/>
            <person name="Benito M.-I."/>
            <person name="Town C.D."/>
            <person name="Fujii C.Y."/>
            <person name="Mason T.M."/>
            <person name="Bowman C.L."/>
            <person name="Barnstead M.E."/>
            <person name="Feldblyum T.V."/>
            <person name="Buell C.R."/>
            <person name="Ketchum K.A."/>
            <person name="Lee J.J."/>
            <person name="Ronning C.M."/>
            <person name="Koo H.L."/>
            <person name="Moffat K.S."/>
            <person name="Cronin L.A."/>
            <person name="Shen M."/>
            <person name="Pai G."/>
            <person name="Van Aken S."/>
            <person name="Umayam L."/>
            <person name="Tallon L.J."/>
            <person name="Gill J.E."/>
            <person name="Adams M.D."/>
            <person name="Carrera A.J."/>
            <person name="Creasy T.H."/>
            <person name="Goodman H.M."/>
            <person name="Somerville C.R."/>
            <person name="Copenhaver G.P."/>
            <person name="Preuss D."/>
            <person name="Nierman W.C."/>
            <person name="White O."/>
            <person name="Eisen J.A."/>
            <person name="Salzberg S.L."/>
            <person name="Fraser C.M."/>
            <person name="Venter J.C."/>
        </authorList>
    </citation>
    <scope>NUCLEOTIDE SEQUENCE [LARGE SCALE GENOMIC DNA]</scope>
    <source>
        <strain>cv. Columbia</strain>
    </source>
</reference>
<reference key="3">
    <citation type="journal article" date="2017" name="Plant J.">
        <title>Araport11: a complete reannotation of the Arabidopsis thaliana reference genome.</title>
        <authorList>
            <person name="Cheng C.Y."/>
            <person name="Krishnakumar V."/>
            <person name="Chan A.P."/>
            <person name="Thibaud-Nissen F."/>
            <person name="Schobel S."/>
            <person name="Town C.D."/>
        </authorList>
    </citation>
    <scope>GENOME REANNOTATION</scope>
    <source>
        <strain>cv. Columbia</strain>
    </source>
</reference>
<reference key="4">
    <citation type="journal article" date="2003" name="Science">
        <title>Empirical analysis of transcriptional activity in the Arabidopsis genome.</title>
        <authorList>
            <person name="Yamada K."/>
            <person name="Lim J."/>
            <person name="Dale J.M."/>
            <person name="Chen H."/>
            <person name="Shinn P."/>
            <person name="Palm C.J."/>
            <person name="Southwick A.M."/>
            <person name="Wu H.C."/>
            <person name="Kim C.J."/>
            <person name="Nguyen M."/>
            <person name="Pham P.K."/>
            <person name="Cheuk R.F."/>
            <person name="Karlin-Newmann G."/>
            <person name="Liu S.X."/>
            <person name="Lam B."/>
            <person name="Sakano H."/>
            <person name="Wu T."/>
            <person name="Yu G."/>
            <person name="Miranda M."/>
            <person name="Quach H.L."/>
            <person name="Tripp M."/>
            <person name="Chang C.H."/>
            <person name="Lee J.M."/>
            <person name="Toriumi M.J."/>
            <person name="Chan M.M."/>
            <person name="Tang C.C."/>
            <person name="Onodera C.S."/>
            <person name="Deng J.M."/>
            <person name="Akiyama K."/>
            <person name="Ansari Y."/>
            <person name="Arakawa T."/>
            <person name="Banh J."/>
            <person name="Banno F."/>
            <person name="Bowser L."/>
            <person name="Brooks S.Y."/>
            <person name="Carninci P."/>
            <person name="Chao Q."/>
            <person name="Choy N."/>
            <person name="Enju A."/>
            <person name="Goldsmith A.D."/>
            <person name="Gurjal M."/>
            <person name="Hansen N.F."/>
            <person name="Hayashizaki Y."/>
            <person name="Johnson-Hopson C."/>
            <person name="Hsuan V.W."/>
            <person name="Iida K."/>
            <person name="Karnes M."/>
            <person name="Khan S."/>
            <person name="Koesema E."/>
            <person name="Ishida J."/>
            <person name="Jiang P.X."/>
            <person name="Jones T."/>
            <person name="Kawai J."/>
            <person name="Kamiya A."/>
            <person name="Meyers C."/>
            <person name="Nakajima M."/>
            <person name="Narusaka M."/>
            <person name="Seki M."/>
            <person name="Sakurai T."/>
            <person name="Satou M."/>
            <person name="Tamse R."/>
            <person name="Vaysberg M."/>
            <person name="Wallender E.K."/>
            <person name="Wong C."/>
            <person name="Yamamura Y."/>
            <person name="Yuan S."/>
            <person name="Shinozaki K."/>
            <person name="Davis R.W."/>
            <person name="Theologis A."/>
            <person name="Ecker J.R."/>
        </authorList>
    </citation>
    <scope>NUCLEOTIDE SEQUENCE [LARGE SCALE MRNA]</scope>
    <source>
        <strain>cv. Columbia</strain>
    </source>
</reference>
<reference key="5">
    <citation type="journal article" date="2013" name="Plant Physiol.">
        <title>The REIL1 and REIL2 proteins of Arabidopsis thaliana are required for leaf growth in the cold.</title>
        <authorList>
            <person name="Schmidt S."/>
            <person name="Dethloff F."/>
            <person name="Beine-Golovchuk O."/>
            <person name="Kopka J."/>
        </authorList>
    </citation>
    <scope>FUNCTION</scope>
    <scope>INDUCTION BY COLD</scope>
    <scope>DISRUPTION PHENOTYPE</scope>
</reference>
<reference key="6">
    <citation type="journal article" date="2014" name="Plant Signal. Behav.">
        <title>REIL proteins of Arabidopsis thaliana interact in yeast-2-hybrid assays with homologs of the yeast Rlp24, Rpl24A, Rlp24B, Arx1, and Jjj1 proteins.</title>
        <authorList>
            <person name="Schmidt S."/>
            <person name="Dethloff F."/>
            <person name="Beine-Golovchuk O."/>
            <person name="Kopka J."/>
        </authorList>
    </citation>
    <scope>SUBUNIT</scope>
    <scope>INTERACTION WITH RLP24; RLP24A; RPL24B; EBP1 AND JJJ1</scope>
</reference>
<sequence>MSGLACNSCNKDFEDDAEQKFHYKSEWHRYNLKRKIAGVPGVTEALFEARQAAIAQEKVKAVEAPMLYSCGICNKGYRSSKAHEQHLKSKSHVLKASTSTGEEDKAIIKQLPPRRVEKNNTAQLKGSIEEEESEDEWIEVDSDEDLDAEMNEDGEEEDMDEDGIEFELDPACCLMCDKKHKTIEKCMVHMHKFHGFFIPDIEYLKDPKGFLTYLGLKVKRDFVCLYCNELCHPFSSLEAVRKHMDAKGHCKVHYGDGGDEEDAELEEFYDYSSSYVNGDENQMVVSGESVNTVELFGGSELVITKRTDNKVTSRTLGSREFMRYYKQKPAPSSQKHIVNSLTSRYKMMGLATVQSKEAIVRMKVMREMNKRGAKSSVRLGMKSNVIRNLPNNVTY</sequence>
<protein>
    <recommendedName>
        <fullName evidence="8">Cytoplasmic 60S subunit biogenesis factor REI1 homolog 2</fullName>
    </recommendedName>
    <alternativeName>
        <fullName evidence="6">Protein REI1-LIKE 2</fullName>
    </alternativeName>
    <alternativeName>
        <fullName evidence="8">pre-60S factor REI1 homolog 2</fullName>
    </alternativeName>
</protein>
<organism>
    <name type="scientific">Arabidopsis thaliana</name>
    <name type="common">Mouse-ear cress</name>
    <dbReference type="NCBI Taxonomy" id="3702"/>
    <lineage>
        <taxon>Eukaryota</taxon>
        <taxon>Viridiplantae</taxon>
        <taxon>Streptophyta</taxon>
        <taxon>Embryophyta</taxon>
        <taxon>Tracheophyta</taxon>
        <taxon>Spermatophyta</taxon>
        <taxon>Magnoliopsida</taxon>
        <taxon>eudicotyledons</taxon>
        <taxon>Gunneridae</taxon>
        <taxon>Pentapetalae</taxon>
        <taxon>rosids</taxon>
        <taxon>malvids</taxon>
        <taxon>Brassicales</taxon>
        <taxon>Brassicaceae</taxon>
        <taxon>Camelineae</taxon>
        <taxon>Arabidopsis</taxon>
    </lineage>
</organism>
<gene>
    <name evidence="6" type="primary">REIL2</name>
    <name evidence="7" type="synonym">FZF</name>
    <name evidence="9" type="ordered locus">At2g24500</name>
    <name evidence="10" type="ORF">T28I24.23</name>
</gene>
<dbReference type="EMBL" id="AF095588">
    <property type="protein sequence ID" value="AAD25324.1"/>
    <property type="molecule type" value="mRNA"/>
</dbReference>
<dbReference type="EMBL" id="AC006403">
    <property type="protein sequence ID" value="AAD18121.1"/>
    <property type="molecule type" value="Genomic_DNA"/>
</dbReference>
<dbReference type="EMBL" id="CP002685">
    <property type="protein sequence ID" value="AEC07585.1"/>
    <property type="molecule type" value="Genomic_DNA"/>
</dbReference>
<dbReference type="EMBL" id="AY062620">
    <property type="protein sequence ID" value="AAL32698.1"/>
    <property type="molecule type" value="mRNA"/>
</dbReference>
<dbReference type="EMBL" id="AY114695">
    <property type="protein sequence ID" value="AAM48014.1"/>
    <property type="molecule type" value="mRNA"/>
</dbReference>
<dbReference type="PIR" id="T52423">
    <property type="entry name" value="T52423"/>
</dbReference>
<dbReference type="RefSeq" id="NP_180026.1">
    <property type="nucleotide sequence ID" value="NM_128011.5"/>
</dbReference>
<dbReference type="FunCoup" id="Q9ZQ18">
    <property type="interactions" value="4120"/>
</dbReference>
<dbReference type="IntAct" id="Q9ZQ18">
    <property type="interactions" value="4"/>
</dbReference>
<dbReference type="STRING" id="3702.Q9ZQ18"/>
<dbReference type="iPTMnet" id="Q9ZQ18"/>
<dbReference type="PaxDb" id="3702-AT2G24500.1"/>
<dbReference type="ProteomicsDB" id="235033"/>
<dbReference type="EnsemblPlants" id="AT2G24500.1">
    <property type="protein sequence ID" value="AT2G24500.1"/>
    <property type="gene ID" value="AT2G24500"/>
</dbReference>
<dbReference type="GeneID" id="816986"/>
<dbReference type="Gramene" id="AT2G24500.1">
    <property type="protein sequence ID" value="AT2G24500.1"/>
    <property type="gene ID" value="AT2G24500"/>
</dbReference>
<dbReference type="KEGG" id="ath:AT2G24500"/>
<dbReference type="Araport" id="AT2G24500"/>
<dbReference type="TAIR" id="AT2G24500">
    <property type="gene designation" value="FZF"/>
</dbReference>
<dbReference type="eggNOG" id="KOG2785">
    <property type="taxonomic scope" value="Eukaryota"/>
</dbReference>
<dbReference type="HOGENOM" id="CLU_018787_0_0_1"/>
<dbReference type="InParanoid" id="Q9ZQ18"/>
<dbReference type="OMA" id="TTCLFAH"/>
<dbReference type="PhylomeDB" id="Q9ZQ18"/>
<dbReference type="PRO" id="PR:Q9ZQ18"/>
<dbReference type="Proteomes" id="UP000006548">
    <property type="component" value="Chromosome 2"/>
</dbReference>
<dbReference type="ExpressionAtlas" id="Q9ZQ18">
    <property type="expression patterns" value="baseline and differential"/>
</dbReference>
<dbReference type="GO" id="GO:0005737">
    <property type="term" value="C:cytoplasm"/>
    <property type="evidence" value="ECO:0000314"/>
    <property type="project" value="TAIR"/>
</dbReference>
<dbReference type="GO" id="GO:0005829">
    <property type="term" value="C:cytosol"/>
    <property type="evidence" value="ECO:0000314"/>
    <property type="project" value="TAIR"/>
</dbReference>
<dbReference type="GO" id="GO:0005634">
    <property type="term" value="C:nucleus"/>
    <property type="evidence" value="ECO:0000314"/>
    <property type="project" value="TAIR"/>
</dbReference>
<dbReference type="GO" id="GO:0003700">
    <property type="term" value="F:DNA-binding transcription factor activity"/>
    <property type="evidence" value="ECO:0000250"/>
    <property type="project" value="TAIR"/>
</dbReference>
<dbReference type="GO" id="GO:0000976">
    <property type="term" value="F:transcription cis-regulatory region binding"/>
    <property type="evidence" value="ECO:0000353"/>
    <property type="project" value="TAIR"/>
</dbReference>
<dbReference type="GO" id="GO:0008270">
    <property type="term" value="F:zinc ion binding"/>
    <property type="evidence" value="ECO:0007669"/>
    <property type="project" value="UniProtKB-KW"/>
</dbReference>
<dbReference type="GO" id="GO:0009631">
    <property type="term" value="P:cold acclimation"/>
    <property type="evidence" value="ECO:0000315"/>
    <property type="project" value="TAIR"/>
</dbReference>
<dbReference type="GO" id="GO:0090070">
    <property type="term" value="P:positive regulation of ribosome biogenesis"/>
    <property type="evidence" value="ECO:0000316"/>
    <property type="project" value="TAIR"/>
</dbReference>
<dbReference type="GO" id="GO:0006355">
    <property type="term" value="P:regulation of DNA-templated transcription"/>
    <property type="evidence" value="ECO:0000304"/>
    <property type="project" value="TAIR"/>
</dbReference>
<dbReference type="GO" id="GO:0042273">
    <property type="term" value="P:ribosomal large subunit biogenesis"/>
    <property type="evidence" value="ECO:0000314"/>
    <property type="project" value="UniProtKB"/>
</dbReference>
<dbReference type="GO" id="GO:0006364">
    <property type="term" value="P:rRNA processing"/>
    <property type="evidence" value="ECO:0000315"/>
    <property type="project" value="TAIR"/>
</dbReference>
<dbReference type="InterPro" id="IPR003604">
    <property type="entry name" value="Matrin/U1-like-C_Znf_C2H2"/>
</dbReference>
<dbReference type="InterPro" id="IPR041661">
    <property type="entry name" value="ZN622/Rei1/Reh1_Znf-C2H2"/>
</dbReference>
<dbReference type="InterPro" id="IPR040025">
    <property type="entry name" value="Znf622/Rei1/Reh1"/>
</dbReference>
<dbReference type="InterPro" id="IPR022755">
    <property type="entry name" value="Znf_C2H2_jaz"/>
</dbReference>
<dbReference type="InterPro" id="IPR036236">
    <property type="entry name" value="Znf_C2H2_sf"/>
</dbReference>
<dbReference type="InterPro" id="IPR013087">
    <property type="entry name" value="Znf_C2H2_type"/>
</dbReference>
<dbReference type="PANTHER" id="PTHR13182:SF20">
    <property type="entry name" value="CYTOPLASMIC 60S SUBUNIT BIOGENESIS FACTOR REI1 HOMOLOG 2"/>
    <property type="match status" value="1"/>
</dbReference>
<dbReference type="PANTHER" id="PTHR13182">
    <property type="entry name" value="ZINC FINGER PROTEIN 622"/>
    <property type="match status" value="1"/>
</dbReference>
<dbReference type="Pfam" id="PF12756">
    <property type="entry name" value="zf-C2H2_2"/>
    <property type="match status" value="1"/>
</dbReference>
<dbReference type="Pfam" id="PF12171">
    <property type="entry name" value="zf-C2H2_jaz"/>
    <property type="match status" value="1"/>
</dbReference>
<dbReference type="SMART" id="SM00355">
    <property type="entry name" value="ZnF_C2H2"/>
    <property type="match status" value="4"/>
</dbReference>
<dbReference type="SMART" id="SM00451">
    <property type="entry name" value="ZnF_U1"/>
    <property type="match status" value="2"/>
</dbReference>
<dbReference type="SUPFAM" id="SSF57667">
    <property type="entry name" value="beta-beta-alpha zinc fingers"/>
    <property type="match status" value="2"/>
</dbReference>
<dbReference type="PROSITE" id="PS00028">
    <property type="entry name" value="ZINC_FINGER_C2H2_1"/>
    <property type="match status" value="2"/>
</dbReference>
<evidence type="ECO:0000250" key="1">
    <source>
        <dbReference type="UniProtKB" id="P38344"/>
    </source>
</evidence>
<evidence type="ECO:0000255" key="2"/>
<evidence type="ECO:0000255" key="3">
    <source>
        <dbReference type="PROSITE-ProRule" id="PRU00042"/>
    </source>
</evidence>
<evidence type="ECO:0000269" key="4">
    <source>
    </source>
</evidence>
<evidence type="ECO:0000269" key="5">
    <source>
    </source>
</evidence>
<evidence type="ECO:0000303" key="6">
    <source>
    </source>
</evidence>
<evidence type="ECO:0000303" key="7">
    <source ref="1"/>
</evidence>
<evidence type="ECO:0000305" key="8"/>
<evidence type="ECO:0000312" key="9">
    <source>
        <dbReference type="Araport" id="AT2G24500"/>
    </source>
</evidence>
<evidence type="ECO:0000312" key="10">
    <source>
        <dbReference type="EMBL" id="AAD18121.1"/>
    </source>
</evidence>
<accession>Q9ZQ18</accession>
<proteinExistence type="evidence at protein level"/>
<comment type="function">
    <text evidence="1 4">Pre-60S-associated factor involved in the cytoplasmic maturation of the 60S subunit. Involved in the dissociation and recycling of other late pre-60S factors before newly synthesized large ribosomal subunits enter translation (By similarity). Can complement the growth defect of a yeast mutant lacking REI1 (PubMed:24038679). Required for leaf growth under cold temperature conditions (PubMed:24038679).</text>
</comment>
<comment type="subunit">
    <text evidence="5">Can form homodimer. Interacts with RLP24, RLP24A, RPL24B, EBP1 and JJJ1.</text>
</comment>
<comment type="subcellular location">
    <subcellularLocation>
        <location evidence="1">Cytoplasm</location>
    </subcellularLocation>
</comment>
<comment type="induction">
    <text evidence="4">By cold.</text>
</comment>
<comment type="disruption phenotype">
    <text evidence="4">No visible phenotype under normal growth conditions. When grown at 10 degrees Celsius, the double mutant seedlings reil1-1 and reil2-1 show growth arrest at two cotyledon stage and die.</text>
</comment>
<comment type="similarity">
    <text evidence="8">Belongs to the REI1 family.</text>
</comment>
<name>REIL2_ARATH</name>
<feature type="chain" id="PRO_0000435444" description="Cytoplasmic 60S subunit biogenesis factor REI1 homolog 2">
    <location>
        <begin position="1"/>
        <end position="395"/>
    </location>
</feature>
<feature type="zinc finger region" description="C2H2-type 1" evidence="3">
    <location>
        <begin position="4"/>
        <end position="28"/>
    </location>
</feature>
<feature type="zinc finger region" description="C2H2-type 2" evidence="3">
    <location>
        <begin position="68"/>
        <end position="92"/>
    </location>
</feature>
<feature type="zinc finger region" description="C2H2-type 3" evidence="2">
    <location>
        <begin position="171"/>
        <end position="194"/>
    </location>
</feature>
<feature type="zinc finger region" description="C2H2-type 4" evidence="2">
    <location>
        <begin position="222"/>
        <end position="249"/>
    </location>
</feature>